<reference key="1">
    <citation type="journal article" date="2009" name="J. Bacteriol.">
        <title>Complete and draft genome sequences of six members of the Aquificales.</title>
        <authorList>
            <person name="Reysenbach A.-L."/>
            <person name="Hamamura N."/>
            <person name="Podar M."/>
            <person name="Griffiths E."/>
            <person name="Ferreira S."/>
            <person name="Hochstein R."/>
            <person name="Heidelberg J."/>
            <person name="Johnson J."/>
            <person name="Mead D."/>
            <person name="Pohorille A."/>
            <person name="Sarmiento M."/>
            <person name="Schweighofer K."/>
            <person name="Seshadri R."/>
            <person name="Voytek M.A."/>
        </authorList>
    </citation>
    <scope>NUCLEOTIDE SEQUENCE [LARGE SCALE GENOMIC DNA]</scope>
    <source>
        <strain>Y04AAS1</strain>
    </source>
</reference>
<keyword id="KW-0030">Aminoacyl-tRNA synthetase</keyword>
<keyword id="KW-0067">ATP-binding</keyword>
<keyword id="KW-0963">Cytoplasm</keyword>
<keyword id="KW-0436">Ligase</keyword>
<keyword id="KW-0547">Nucleotide-binding</keyword>
<keyword id="KW-0648">Protein biosynthesis</keyword>
<feature type="chain" id="PRO_1000098079" description="Serine--tRNA ligase">
    <location>
        <begin position="1"/>
        <end position="421"/>
    </location>
</feature>
<feature type="binding site" evidence="1">
    <location>
        <begin position="231"/>
        <end position="233"/>
    </location>
    <ligand>
        <name>L-serine</name>
        <dbReference type="ChEBI" id="CHEBI:33384"/>
    </ligand>
</feature>
<feature type="binding site" evidence="1">
    <location>
        <begin position="262"/>
        <end position="264"/>
    </location>
    <ligand>
        <name>ATP</name>
        <dbReference type="ChEBI" id="CHEBI:30616"/>
    </ligand>
</feature>
<feature type="binding site" evidence="1">
    <location>
        <position position="285"/>
    </location>
    <ligand>
        <name>L-serine</name>
        <dbReference type="ChEBI" id="CHEBI:33384"/>
    </ligand>
</feature>
<feature type="binding site" evidence="1">
    <location>
        <begin position="349"/>
        <end position="352"/>
    </location>
    <ligand>
        <name>ATP</name>
        <dbReference type="ChEBI" id="CHEBI:30616"/>
    </ligand>
</feature>
<feature type="binding site" evidence="1">
    <location>
        <position position="384"/>
    </location>
    <ligand>
        <name>L-serine</name>
        <dbReference type="ChEBI" id="CHEBI:33384"/>
    </ligand>
</feature>
<protein>
    <recommendedName>
        <fullName evidence="1">Serine--tRNA ligase</fullName>
        <ecNumber evidence="1">6.1.1.11</ecNumber>
    </recommendedName>
    <alternativeName>
        <fullName evidence="1">Seryl-tRNA synthetase</fullName>
        <shortName evidence="1">SerRS</shortName>
    </alternativeName>
    <alternativeName>
        <fullName evidence="1">Seryl-tRNA(Ser/Sec) synthetase</fullName>
    </alternativeName>
</protein>
<dbReference type="EC" id="6.1.1.11" evidence="1"/>
<dbReference type="EMBL" id="CP001130">
    <property type="protein sequence ID" value="ACG57062.1"/>
    <property type="molecule type" value="Genomic_DNA"/>
</dbReference>
<dbReference type="RefSeq" id="WP_012513418.1">
    <property type="nucleotide sequence ID" value="NC_011126.1"/>
</dbReference>
<dbReference type="SMR" id="B4U7F1"/>
<dbReference type="STRING" id="380749.HY04AAS1_0372"/>
<dbReference type="KEGG" id="hya:HY04AAS1_0372"/>
<dbReference type="eggNOG" id="COG0172">
    <property type="taxonomic scope" value="Bacteria"/>
</dbReference>
<dbReference type="HOGENOM" id="CLU_023797_1_1_0"/>
<dbReference type="OrthoDB" id="9804647at2"/>
<dbReference type="UniPathway" id="UPA00906">
    <property type="reaction ID" value="UER00895"/>
</dbReference>
<dbReference type="GO" id="GO:0005737">
    <property type="term" value="C:cytoplasm"/>
    <property type="evidence" value="ECO:0007669"/>
    <property type="project" value="UniProtKB-SubCell"/>
</dbReference>
<dbReference type="GO" id="GO:0005524">
    <property type="term" value="F:ATP binding"/>
    <property type="evidence" value="ECO:0007669"/>
    <property type="project" value="UniProtKB-UniRule"/>
</dbReference>
<dbReference type="GO" id="GO:0004828">
    <property type="term" value="F:serine-tRNA ligase activity"/>
    <property type="evidence" value="ECO:0007669"/>
    <property type="project" value="UniProtKB-UniRule"/>
</dbReference>
<dbReference type="GO" id="GO:0016260">
    <property type="term" value="P:selenocysteine biosynthetic process"/>
    <property type="evidence" value="ECO:0007669"/>
    <property type="project" value="UniProtKB-UniRule"/>
</dbReference>
<dbReference type="GO" id="GO:0006434">
    <property type="term" value="P:seryl-tRNA aminoacylation"/>
    <property type="evidence" value="ECO:0007669"/>
    <property type="project" value="UniProtKB-UniRule"/>
</dbReference>
<dbReference type="CDD" id="cd00770">
    <property type="entry name" value="SerRS_core"/>
    <property type="match status" value="1"/>
</dbReference>
<dbReference type="Gene3D" id="3.30.930.10">
    <property type="entry name" value="Bira Bifunctional Protein, Domain 2"/>
    <property type="match status" value="1"/>
</dbReference>
<dbReference type="Gene3D" id="1.10.287.40">
    <property type="entry name" value="Serine-tRNA synthetase, tRNA binding domain"/>
    <property type="match status" value="1"/>
</dbReference>
<dbReference type="HAMAP" id="MF_00176">
    <property type="entry name" value="Ser_tRNA_synth_type1"/>
    <property type="match status" value="1"/>
</dbReference>
<dbReference type="InterPro" id="IPR002314">
    <property type="entry name" value="aa-tRNA-synt_IIb"/>
</dbReference>
<dbReference type="InterPro" id="IPR006195">
    <property type="entry name" value="aa-tRNA-synth_II"/>
</dbReference>
<dbReference type="InterPro" id="IPR045864">
    <property type="entry name" value="aa-tRNA-synth_II/BPL/LPL"/>
</dbReference>
<dbReference type="InterPro" id="IPR002317">
    <property type="entry name" value="Ser-tRNA-ligase_type_1"/>
</dbReference>
<dbReference type="InterPro" id="IPR015866">
    <property type="entry name" value="Ser-tRNA-synth_1_N"/>
</dbReference>
<dbReference type="InterPro" id="IPR042103">
    <property type="entry name" value="SerRS_1_N_sf"/>
</dbReference>
<dbReference type="InterPro" id="IPR033729">
    <property type="entry name" value="SerRS_core"/>
</dbReference>
<dbReference type="InterPro" id="IPR010978">
    <property type="entry name" value="tRNA-bd_arm"/>
</dbReference>
<dbReference type="NCBIfam" id="TIGR00414">
    <property type="entry name" value="serS"/>
    <property type="match status" value="1"/>
</dbReference>
<dbReference type="PANTHER" id="PTHR43697:SF1">
    <property type="entry name" value="SERINE--TRNA LIGASE"/>
    <property type="match status" value="1"/>
</dbReference>
<dbReference type="PANTHER" id="PTHR43697">
    <property type="entry name" value="SERYL-TRNA SYNTHETASE"/>
    <property type="match status" value="1"/>
</dbReference>
<dbReference type="Pfam" id="PF02403">
    <property type="entry name" value="Seryl_tRNA_N"/>
    <property type="match status" value="1"/>
</dbReference>
<dbReference type="Pfam" id="PF00587">
    <property type="entry name" value="tRNA-synt_2b"/>
    <property type="match status" value="1"/>
</dbReference>
<dbReference type="PIRSF" id="PIRSF001529">
    <property type="entry name" value="Ser-tRNA-synth_IIa"/>
    <property type="match status" value="1"/>
</dbReference>
<dbReference type="PRINTS" id="PR00981">
    <property type="entry name" value="TRNASYNTHSER"/>
</dbReference>
<dbReference type="SUPFAM" id="SSF55681">
    <property type="entry name" value="Class II aaRS and biotin synthetases"/>
    <property type="match status" value="1"/>
</dbReference>
<dbReference type="SUPFAM" id="SSF46589">
    <property type="entry name" value="tRNA-binding arm"/>
    <property type="match status" value="1"/>
</dbReference>
<dbReference type="PROSITE" id="PS50862">
    <property type="entry name" value="AA_TRNA_LIGASE_II"/>
    <property type="match status" value="1"/>
</dbReference>
<sequence length="421" mass="48635">MISIELIRKNPEYVKENLAKRDMFLKDRIDDILKLDEERRHKIKRIEDLRALRNAKSKEIGSLKKQGLNTESLEEEIRLIKEEISKLEEELARIEKYTEDLLLRVPNLLHESVPYGKDENDNVEIKRWGEIPKFDFGIKDHADLGVLRGFIDFDQATAISGSRFSILKGPLAKLERALINFMLEINAKNGYQEMIVPHLVKPQTLVGTGQLPKFQEELYYVKDDDLYLIPTAEVPLVNVFKDTILKEDDLPINLTAYTPCYRREAGSHGKDVKGLIRQHQFDKVELVKIVHPDSSYDELERLLSNAEEILQLLELPYRVVALCSGDIGFSASKTYDIEVWIPSQNKYREISSCSNCEDFQARRANMRFKDKTGKNRFVHTLNGSSLAVGRTLVAIMENYQTKDHKIRIPKVLKDYIKGECI</sequence>
<organism>
    <name type="scientific">Hydrogenobaculum sp. (strain Y04AAS1)</name>
    <dbReference type="NCBI Taxonomy" id="380749"/>
    <lineage>
        <taxon>Bacteria</taxon>
        <taxon>Pseudomonadati</taxon>
        <taxon>Aquificota</taxon>
        <taxon>Aquificia</taxon>
        <taxon>Aquificales</taxon>
        <taxon>Aquificaceae</taxon>
        <taxon>Hydrogenobaculum</taxon>
    </lineage>
</organism>
<gene>
    <name evidence="1" type="primary">serS</name>
    <name type="ordered locus">HY04AAS1_0372</name>
</gene>
<name>SYS_HYDS0</name>
<comment type="function">
    <text evidence="1">Catalyzes the attachment of serine to tRNA(Ser). Is also able to aminoacylate tRNA(Sec) with serine, to form the misacylated tRNA L-seryl-tRNA(Sec), which will be further converted into selenocysteinyl-tRNA(Sec).</text>
</comment>
<comment type="catalytic activity">
    <reaction evidence="1">
        <text>tRNA(Ser) + L-serine + ATP = L-seryl-tRNA(Ser) + AMP + diphosphate + H(+)</text>
        <dbReference type="Rhea" id="RHEA:12292"/>
        <dbReference type="Rhea" id="RHEA-COMP:9669"/>
        <dbReference type="Rhea" id="RHEA-COMP:9703"/>
        <dbReference type="ChEBI" id="CHEBI:15378"/>
        <dbReference type="ChEBI" id="CHEBI:30616"/>
        <dbReference type="ChEBI" id="CHEBI:33019"/>
        <dbReference type="ChEBI" id="CHEBI:33384"/>
        <dbReference type="ChEBI" id="CHEBI:78442"/>
        <dbReference type="ChEBI" id="CHEBI:78533"/>
        <dbReference type="ChEBI" id="CHEBI:456215"/>
        <dbReference type="EC" id="6.1.1.11"/>
    </reaction>
</comment>
<comment type="catalytic activity">
    <reaction evidence="1">
        <text>tRNA(Sec) + L-serine + ATP = L-seryl-tRNA(Sec) + AMP + diphosphate + H(+)</text>
        <dbReference type="Rhea" id="RHEA:42580"/>
        <dbReference type="Rhea" id="RHEA-COMP:9742"/>
        <dbReference type="Rhea" id="RHEA-COMP:10128"/>
        <dbReference type="ChEBI" id="CHEBI:15378"/>
        <dbReference type="ChEBI" id="CHEBI:30616"/>
        <dbReference type="ChEBI" id="CHEBI:33019"/>
        <dbReference type="ChEBI" id="CHEBI:33384"/>
        <dbReference type="ChEBI" id="CHEBI:78442"/>
        <dbReference type="ChEBI" id="CHEBI:78533"/>
        <dbReference type="ChEBI" id="CHEBI:456215"/>
        <dbReference type="EC" id="6.1.1.11"/>
    </reaction>
</comment>
<comment type="pathway">
    <text evidence="1">Aminoacyl-tRNA biosynthesis; selenocysteinyl-tRNA(Sec) biosynthesis; L-seryl-tRNA(Sec) from L-serine and tRNA(Sec): step 1/1.</text>
</comment>
<comment type="subunit">
    <text evidence="1">Homodimer. The tRNA molecule binds across the dimer.</text>
</comment>
<comment type="subcellular location">
    <subcellularLocation>
        <location evidence="1">Cytoplasm</location>
    </subcellularLocation>
</comment>
<comment type="domain">
    <text evidence="1">Consists of two distinct domains, a catalytic core and a N-terminal extension that is involved in tRNA binding.</text>
</comment>
<comment type="similarity">
    <text evidence="1">Belongs to the class-II aminoacyl-tRNA synthetase family. Type-1 seryl-tRNA synthetase subfamily.</text>
</comment>
<proteinExistence type="inferred from homology"/>
<accession>B4U7F1</accession>
<evidence type="ECO:0000255" key="1">
    <source>
        <dbReference type="HAMAP-Rule" id="MF_00176"/>
    </source>
</evidence>